<gene>
    <name evidence="1" type="primary">maeA</name>
    <name type="ordered locus">ECA2831</name>
</gene>
<evidence type="ECO:0000255" key="1">
    <source>
        <dbReference type="HAMAP-Rule" id="MF_01619"/>
    </source>
</evidence>
<sequence length="565" mass="62720">MELEYESKRPLYIPYAGPILLEFPLLNKGSAFTEEERADFNLAGLLPEAVETIEEQAERAWRQYQEFKHDIEKHVYLRNIQDTNETLFYRLLDGHLNEMMPIIYTPTVGEACEHFSDIYRRARGLFISYPNRANIDDMLQNATKQNVKVIVVTDGERILGLGDQGIGGMGIPIGKLALYTACGGISPAYTLPVVLDVGTNNPQRLNDPLYMGWRHPRITDDEYYAFVDEFIQAVKRRWPNVLLQFEDFAQKNATPLLNRYRDEICSFNDDIQGTAAVAIGSLIAASRAAGTQLRDQTVAFLGAGSAGCGIAEQIIAQMKSEGLSEEEARARVFMVDRFGLLTDKLPNLLDFQSKLVQKSELLADWDCNSDAISLLEVVRNAKPTIMIGVSGQPGLFTEEIIREMYKHCARPIVMPLSNPTSRVEARPEDIIRWTEGSALVATGSPFSPVHYQDKVFPIAQCNNSYIFPGIGLGVLASGANRITDGMLMAASRALADCSPLANNGEGALLPDLSDIQQVSKRIALDVGKAAQLQGVAVVTSADALQKAIDHNFWQPQYRSYKRTSF</sequence>
<accession>Q6D3B3</accession>
<comment type="catalytic activity">
    <reaction evidence="1">
        <text>(S)-malate + NAD(+) = pyruvate + CO2 + NADH</text>
        <dbReference type="Rhea" id="RHEA:12653"/>
        <dbReference type="ChEBI" id="CHEBI:15361"/>
        <dbReference type="ChEBI" id="CHEBI:15589"/>
        <dbReference type="ChEBI" id="CHEBI:16526"/>
        <dbReference type="ChEBI" id="CHEBI:57540"/>
        <dbReference type="ChEBI" id="CHEBI:57945"/>
        <dbReference type="EC" id="1.1.1.38"/>
    </reaction>
</comment>
<comment type="catalytic activity">
    <reaction evidence="1">
        <text>oxaloacetate + H(+) = pyruvate + CO2</text>
        <dbReference type="Rhea" id="RHEA:15641"/>
        <dbReference type="ChEBI" id="CHEBI:15361"/>
        <dbReference type="ChEBI" id="CHEBI:15378"/>
        <dbReference type="ChEBI" id="CHEBI:16452"/>
        <dbReference type="ChEBI" id="CHEBI:16526"/>
        <dbReference type="EC" id="1.1.1.38"/>
    </reaction>
</comment>
<comment type="cofactor">
    <cofactor evidence="1">
        <name>Mg(2+)</name>
        <dbReference type="ChEBI" id="CHEBI:18420"/>
    </cofactor>
    <cofactor evidence="1">
        <name>Mn(2+)</name>
        <dbReference type="ChEBI" id="CHEBI:29035"/>
    </cofactor>
    <text evidence="1">Divalent metal cations. Prefers magnesium or manganese.</text>
</comment>
<comment type="subunit">
    <text evidence="1">Homotetramer.</text>
</comment>
<comment type="similarity">
    <text evidence="1">Belongs to the malic enzymes family.</text>
</comment>
<name>MAO1_PECAS</name>
<feature type="chain" id="PRO_0000160218" description="NAD-dependent malic enzyme">
    <location>
        <begin position="1"/>
        <end position="565"/>
    </location>
</feature>
<feature type="active site" description="Proton donor" evidence="1">
    <location>
        <position position="104"/>
    </location>
</feature>
<feature type="active site" description="Proton acceptor" evidence="1">
    <location>
        <position position="175"/>
    </location>
</feature>
<feature type="binding site" evidence="1">
    <location>
        <position position="157"/>
    </location>
    <ligand>
        <name>NAD(+)</name>
        <dbReference type="ChEBI" id="CHEBI:57540"/>
    </ligand>
</feature>
<feature type="binding site" evidence="1">
    <location>
        <position position="246"/>
    </location>
    <ligand>
        <name>a divalent metal cation</name>
        <dbReference type="ChEBI" id="CHEBI:60240"/>
    </ligand>
</feature>
<feature type="binding site" evidence="1">
    <location>
        <position position="247"/>
    </location>
    <ligand>
        <name>a divalent metal cation</name>
        <dbReference type="ChEBI" id="CHEBI:60240"/>
    </ligand>
</feature>
<feature type="binding site" evidence="1">
    <location>
        <position position="270"/>
    </location>
    <ligand>
        <name>a divalent metal cation</name>
        <dbReference type="ChEBI" id="CHEBI:60240"/>
    </ligand>
</feature>
<feature type="binding site" evidence="1">
    <location>
        <position position="270"/>
    </location>
    <ligand>
        <name>NAD(+)</name>
        <dbReference type="ChEBI" id="CHEBI:57540"/>
    </ligand>
</feature>
<feature type="binding site" evidence="1">
    <location>
        <position position="418"/>
    </location>
    <ligand>
        <name>NAD(+)</name>
        <dbReference type="ChEBI" id="CHEBI:57540"/>
    </ligand>
</feature>
<feature type="site" description="Important for activity" evidence="1">
    <location>
        <position position="270"/>
    </location>
</feature>
<protein>
    <recommendedName>
        <fullName evidence="1">NAD-dependent malic enzyme</fullName>
        <shortName evidence="1">NAD-ME</shortName>
        <ecNumber evidence="1">1.1.1.38</ecNumber>
    </recommendedName>
</protein>
<dbReference type="EC" id="1.1.1.38" evidence="1"/>
<dbReference type="EMBL" id="BX950851">
    <property type="protein sequence ID" value="CAG75731.1"/>
    <property type="molecule type" value="Genomic_DNA"/>
</dbReference>
<dbReference type="RefSeq" id="WP_011094365.1">
    <property type="nucleotide sequence ID" value="NC_004547.2"/>
</dbReference>
<dbReference type="SMR" id="Q6D3B3"/>
<dbReference type="STRING" id="218491.ECA2831"/>
<dbReference type="KEGG" id="eca:ECA2831"/>
<dbReference type="PATRIC" id="fig|218491.5.peg.2872"/>
<dbReference type="eggNOG" id="COG0281">
    <property type="taxonomic scope" value="Bacteria"/>
</dbReference>
<dbReference type="HOGENOM" id="CLU_011405_5_2_6"/>
<dbReference type="OrthoDB" id="3314528at2"/>
<dbReference type="Proteomes" id="UP000007966">
    <property type="component" value="Chromosome"/>
</dbReference>
<dbReference type="GO" id="GO:0005829">
    <property type="term" value="C:cytosol"/>
    <property type="evidence" value="ECO:0007669"/>
    <property type="project" value="TreeGrafter"/>
</dbReference>
<dbReference type="GO" id="GO:0004471">
    <property type="term" value="F:malate dehydrogenase (decarboxylating) (NAD+) activity"/>
    <property type="evidence" value="ECO:0007669"/>
    <property type="project" value="UniProtKB-UniRule"/>
</dbReference>
<dbReference type="GO" id="GO:0046872">
    <property type="term" value="F:metal ion binding"/>
    <property type="evidence" value="ECO:0007669"/>
    <property type="project" value="UniProtKB-KW"/>
</dbReference>
<dbReference type="GO" id="GO:0051287">
    <property type="term" value="F:NAD binding"/>
    <property type="evidence" value="ECO:0007669"/>
    <property type="project" value="InterPro"/>
</dbReference>
<dbReference type="GO" id="GO:0008948">
    <property type="term" value="F:oxaloacetate decarboxylase activity"/>
    <property type="evidence" value="ECO:0007669"/>
    <property type="project" value="UniProtKB-UniRule"/>
</dbReference>
<dbReference type="GO" id="GO:0006108">
    <property type="term" value="P:malate metabolic process"/>
    <property type="evidence" value="ECO:0007669"/>
    <property type="project" value="TreeGrafter"/>
</dbReference>
<dbReference type="CDD" id="cd05312">
    <property type="entry name" value="NAD_bind_1_malic_enz"/>
    <property type="match status" value="1"/>
</dbReference>
<dbReference type="FunFam" id="3.40.50.10380:FF:000001">
    <property type="entry name" value="NAD-dependent malic enzyme"/>
    <property type="match status" value="1"/>
</dbReference>
<dbReference type="FunFam" id="3.40.50.720:FF:000055">
    <property type="entry name" value="NAD-dependent malic enzyme"/>
    <property type="match status" value="1"/>
</dbReference>
<dbReference type="Gene3D" id="3.40.50.10380">
    <property type="entry name" value="Malic enzyme, N-terminal domain"/>
    <property type="match status" value="1"/>
</dbReference>
<dbReference type="Gene3D" id="3.40.50.720">
    <property type="entry name" value="NAD(P)-binding Rossmann-like Domain"/>
    <property type="match status" value="1"/>
</dbReference>
<dbReference type="HAMAP" id="MF_01619">
    <property type="entry name" value="NAD_malic_enz"/>
    <property type="match status" value="1"/>
</dbReference>
<dbReference type="InterPro" id="IPR046346">
    <property type="entry name" value="Aminoacid_DH-like_N_sf"/>
</dbReference>
<dbReference type="InterPro" id="IPR015884">
    <property type="entry name" value="Malic_enzyme_CS"/>
</dbReference>
<dbReference type="InterPro" id="IPR012301">
    <property type="entry name" value="Malic_N_dom"/>
</dbReference>
<dbReference type="InterPro" id="IPR037062">
    <property type="entry name" value="Malic_N_dom_sf"/>
</dbReference>
<dbReference type="InterPro" id="IPR012302">
    <property type="entry name" value="Malic_NAD-bd"/>
</dbReference>
<dbReference type="InterPro" id="IPR001891">
    <property type="entry name" value="Malic_OxRdtase"/>
</dbReference>
<dbReference type="InterPro" id="IPR036291">
    <property type="entry name" value="NAD(P)-bd_dom_sf"/>
</dbReference>
<dbReference type="InterPro" id="IPR023667">
    <property type="entry name" value="NAD_malic_enz_proteobac"/>
</dbReference>
<dbReference type="NCBIfam" id="NF010052">
    <property type="entry name" value="PRK13529.1"/>
    <property type="match status" value="1"/>
</dbReference>
<dbReference type="PANTHER" id="PTHR23406">
    <property type="entry name" value="MALIC ENZYME-RELATED"/>
    <property type="match status" value="1"/>
</dbReference>
<dbReference type="PANTHER" id="PTHR23406:SF34">
    <property type="entry name" value="NAD-DEPENDENT MALIC ENZYME, MITOCHONDRIAL"/>
    <property type="match status" value="1"/>
</dbReference>
<dbReference type="Pfam" id="PF00390">
    <property type="entry name" value="malic"/>
    <property type="match status" value="1"/>
</dbReference>
<dbReference type="Pfam" id="PF03949">
    <property type="entry name" value="Malic_M"/>
    <property type="match status" value="1"/>
</dbReference>
<dbReference type="PIRSF" id="PIRSF000106">
    <property type="entry name" value="ME"/>
    <property type="match status" value="1"/>
</dbReference>
<dbReference type="PRINTS" id="PR00072">
    <property type="entry name" value="MALOXRDTASE"/>
</dbReference>
<dbReference type="SMART" id="SM01274">
    <property type="entry name" value="malic"/>
    <property type="match status" value="1"/>
</dbReference>
<dbReference type="SMART" id="SM00919">
    <property type="entry name" value="Malic_M"/>
    <property type="match status" value="1"/>
</dbReference>
<dbReference type="SUPFAM" id="SSF53223">
    <property type="entry name" value="Aminoacid dehydrogenase-like, N-terminal domain"/>
    <property type="match status" value="1"/>
</dbReference>
<dbReference type="SUPFAM" id="SSF51735">
    <property type="entry name" value="NAD(P)-binding Rossmann-fold domains"/>
    <property type="match status" value="1"/>
</dbReference>
<dbReference type="PROSITE" id="PS00331">
    <property type="entry name" value="MALIC_ENZYMES"/>
    <property type="match status" value="1"/>
</dbReference>
<reference key="1">
    <citation type="journal article" date="2004" name="Proc. Natl. Acad. Sci. U.S.A.">
        <title>Genome sequence of the enterobacterial phytopathogen Erwinia carotovora subsp. atroseptica and characterization of virulence factors.</title>
        <authorList>
            <person name="Bell K.S."/>
            <person name="Sebaihia M."/>
            <person name="Pritchard L."/>
            <person name="Holden M.T.G."/>
            <person name="Hyman L.J."/>
            <person name="Holeva M.C."/>
            <person name="Thomson N.R."/>
            <person name="Bentley S.D."/>
            <person name="Churcher L.J.C."/>
            <person name="Mungall K."/>
            <person name="Atkin R."/>
            <person name="Bason N."/>
            <person name="Brooks K."/>
            <person name="Chillingworth T."/>
            <person name="Clark K."/>
            <person name="Doggett J."/>
            <person name="Fraser A."/>
            <person name="Hance Z."/>
            <person name="Hauser H."/>
            <person name="Jagels K."/>
            <person name="Moule S."/>
            <person name="Norbertczak H."/>
            <person name="Ormond D."/>
            <person name="Price C."/>
            <person name="Quail M.A."/>
            <person name="Sanders M."/>
            <person name="Walker D."/>
            <person name="Whitehead S."/>
            <person name="Salmond G.P.C."/>
            <person name="Birch P.R.J."/>
            <person name="Parkhill J."/>
            <person name="Toth I.K."/>
        </authorList>
    </citation>
    <scope>NUCLEOTIDE SEQUENCE [LARGE SCALE GENOMIC DNA]</scope>
    <source>
        <strain>SCRI 1043 / ATCC BAA-672</strain>
    </source>
</reference>
<keyword id="KW-0479">Metal-binding</keyword>
<keyword id="KW-0520">NAD</keyword>
<keyword id="KW-0560">Oxidoreductase</keyword>
<keyword id="KW-1185">Reference proteome</keyword>
<proteinExistence type="inferred from homology"/>
<organism>
    <name type="scientific">Pectobacterium atrosepticum (strain SCRI 1043 / ATCC BAA-672)</name>
    <name type="common">Erwinia carotovora subsp. atroseptica</name>
    <dbReference type="NCBI Taxonomy" id="218491"/>
    <lineage>
        <taxon>Bacteria</taxon>
        <taxon>Pseudomonadati</taxon>
        <taxon>Pseudomonadota</taxon>
        <taxon>Gammaproteobacteria</taxon>
        <taxon>Enterobacterales</taxon>
        <taxon>Pectobacteriaceae</taxon>
        <taxon>Pectobacterium</taxon>
    </lineage>
</organism>